<gene>
    <name type="primary">mif</name>
</gene>
<keyword id="KW-0002">3D-structure</keyword>
<keyword id="KW-0202">Cytokine</keyword>
<keyword id="KW-0963">Cytoplasm</keyword>
<keyword id="KW-0391">Immunity</keyword>
<keyword id="KW-0395">Inflammatory response</keyword>
<keyword id="KW-0399">Innate immunity</keyword>
<keyword id="KW-0413">Isomerase</keyword>
<keyword id="KW-1185">Reference proteome</keyword>
<keyword id="KW-0964">Secreted</keyword>
<dbReference type="EC" id="5.3.2.1" evidence="1"/>
<dbReference type="EC" id="5.3.3.12" evidence="1"/>
<dbReference type="EMBL" id="AB111063">
    <property type="protein sequence ID" value="BAD02463.1"/>
    <property type="molecule type" value="mRNA"/>
</dbReference>
<dbReference type="EMBL" id="BC097727">
    <property type="protein sequence ID" value="AAH97727.1"/>
    <property type="molecule type" value="mRNA"/>
</dbReference>
<dbReference type="RefSeq" id="NP_001083650.1">
    <property type="nucleotide sequence ID" value="NM_001090181.1"/>
</dbReference>
<dbReference type="PDB" id="1UIZ">
    <property type="method" value="X-ray"/>
    <property type="resolution" value="2.50 A"/>
    <property type="chains" value="A/B/C/D=1-115"/>
</dbReference>
<dbReference type="PDBsum" id="1UIZ"/>
<dbReference type="SMR" id="Q76BK2"/>
<dbReference type="DNASU" id="399041"/>
<dbReference type="GeneID" id="399041"/>
<dbReference type="KEGG" id="xla:399041"/>
<dbReference type="AGR" id="Xenbase:XB-GENE-487452"/>
<dbReference type="CTD" id="399041"/>
<dbReference type="Xenbase" id="XB-GENE-487452">
    <property type="gene designation" value="mif.L"/>
</dbReference>
<dbReference type="OrthoDB" id="255819at2759"/>
<dbReference type="EvolutionaryTrace" id="Q76BK2"/>
<dbReference type="Proteomes" id="UP000186698">
    <property type="component" value="Chromosome 1L"/>
</dbReference>
<dbReference type="Bgee" id="399041">
    <property type="expression patterns" value="Expressed in brain and 19 other cell types or tissues"/>
</dbReference>
<dbReference type="GO" id="GO:0005737">
    <property type="term" value="C:cytoplasm"/>
    <property type="evidence" value="ECO:0007669"/>
    <property type="project" value="UniProtKB-SubCell"/>
</dbReference>
<dbReference type="GO" id="GO:0005615">
    <property type="term" value="C:extracellular space"/>
    <property type="evidence" value="ECO:0000318"/>
    <property type="project" value="GO_Central"/>
</dbReference>
<dbReference type="GO" id="GO:0005125">
    <property type="term" value="F:cytokine activity"/>
    <property type="evidence" value="ECO:0000318"/>
    <property type="project" value="GO_Central"/>
</dbReference>
<dbReference type="GO" id="GO:0004167">
    <property type="term" value="F:dopachrome isomerase activity"/>
    <property type="evidence" value="ECO:0007669"/>
    <property type="project" value="UniProtKB-EC"/>
</dbReference>
<dbReference type="GO" id="GO:0050178">
    <property type="term" value="F:phenylpyruvate tautomerase activity"/>
    <property type="evidence" value="ECO:0000318"/>
    <property type="project" value="GO_Central"/>
</dbReference>
<dbReference type="GO" id="GO:0006954">
    <property type="term" value="P:inflammatory response"/>
    <property type="evidence" value="ECO:0007669"/>
    <property type="project" value="UniProtKB-KW"/>
</dbReference>
<dbReference type="GO" id="GO:0045087">
    <property type="term" value="P:innate immune response"/>
    <property type="evidence" value="ECO:0007669"/>
    <property type="project" value="UniProtKB-KW"/>
</dbReference>
<dbReference type="Gene3D" id="3.30.429.10">
    <property type="entry name" value="Macrophage Migration Inhibitory Factor"/>
    <property type="match status" value="1"/>
</dbReference>
<dbReference type="InterPro" id="IPR001398">
    <property type="entry name" value="Macrophage_inhib_fac"/>
</dbReference>
<dbReference type="InterPro" id="IPR019829">
    <property type="entry name" value="Macrophage_inhib_fac_CS"/>
</dbReference>
<dbReference type="InterPro" id="IPR014347">
    <property type="entry name" value="Tautomerase/MIF_sf"/>
</dbReference>
<dbReference type="PANTHER" id="PTHR11954">
    <property type="entry name" value="D-DOPACHROME DECARBOXYLASE"/>
    <property type="match status" value="1"/>
</dbReference>
<dbReference type="PANTHER" id="PTHR11954:SF6">
    <property type="entry name" value="MACROPHAGE MIGRATION INHIBITORY FACTOR"/>
    <property type="match status" value="1"/>
</dbReference>
<dbReference type="Pfam" id="PF01187">
    <property type="entry name" value="MIF"/>
    <property type="match status" value="1"/>
</dbReference>
<dbReference type="SUPFAM" id="SSF55331">
    <property type="entry name" value="Tautomerase/MIF"/>
    <property type="match status" value="1"/>
</dbReference>
<dbReference type="PROSITE" id="PS01158">
    <property type="entry name" value="MIF"/>
    <property type="match status" value="1"/>
</dbReference>
<name>MIF_XENLA</name>
<sequence length="115" mass="12500">MPVFTIRTNVCRDSVPDTLLSDLTKQLAKATGKPAEYIAIHIVPDQIMSFGDSTDPCAVCSLCSIGKIGGPQNKSYTKLLCDILTKQLNIPANRVYINYYDLNAANVGWNGSTFA</sequence>
<evidence type="ECO:0000250" key="1">
    <source>
        <dbReference type="UniProtKB" id="P14174"/>
    </source>
</evidence>
<evidence type="ECO:0000250" key="2">
    <source>
        <dbReference type="UniProtKB" id="P34884"/>
    </source>
</evidence>
<evidence type="ECO:0000269" key="3">
    <source>
    </source>
</evidence>
<evidence type="ECO:0000305" key="4"/>
<evidence type="ECO:0007829" key="5">
    <source>
        <dbReference type="PDB" id="1UIZ"/>
    </source>
</evidence>
<proteinExistence type="evidence at protein level"/>
<feature type="initiator methionine" description="Removed" evidence="1">
    <location>
        <position position="1"/>
    </location>
</feature>
<feature type="chain" id="PRO_0000344370" description="Macrophage migration inhibitory factor">
    <location>
        <begin position="2"/>
        <end position="115"/>
    </location>
</feature>
<feature type="active site" description="Proton acceptor; via imino nitrogen" evidence="2">
    <location>
        <position position="2"/>
    </location>
</feature>
<feature type="binding site" evidence="1">
    <location>
        <position position="33"/>
    </location>
    <ligand>
        <name>substrate</name>
    </ligand>
</feature>
<feature type="binding site" evidence="1">
    <location>
        <position position="65"/>
    </location>
    <ligand>
        <name>substrate</name>
    </ligand>
</feature>
<feature type="binding site" evidence="1">
    <location>
        <position position="98"/>
    </location>
    <ligand>
        <name>substrate</name>
    </ligand>
</feature>
<feature type="strand" evidence="5">
    <location>
        <begin position="3"/>
        <end position="10"/>
    </location>
</feature>
<feature type="helix" evidence="5">
    <location>
        <begin position="12"/>
        <end position="14"/>
    </location>
</feature>
<feature type="helix" evidence="5">
    <location>
        <begin position="19"/>
        <end position="31"/>
    </location>
</feature>
<feature type="helix" evidence="5">
    <location>
        <begin position="35"/>
        <end position="37"/>
    </location>
</feature>
<feature type="strand" evidence="5">
    <location>
        <begin position="39"/>
        <end position="43"/>
    </location>
</feature>
<feature type="strand" evidence="5">
    <location>
        <begin position="47"/>
        <end position="50"/>
    </location>
</feature>
<feature type="strand" evidence="5">
    <location>
        <begin position="58"/>
        <end position="66"/>
    </location>
</feature>
<feature type="helix" evidence="5">
    <location>
        <begin position="70"/>
        <end position="88"/>
    </location>
</feature>
<feature type="helix" evidence="5">
    <location>
        <begin position="92"/>
        <end position="94"/>
    </location>
</feature>
<feature type="strand" evidence="5">
    <location>
        <begin position="95"/>
        <end position="101"/>
    </location>
</feature>
<feature type="helix" evidence="5">
    <location>
        <begin position="104"/>
        <end position="106"/>
    </location>
</feature>
<feature type="strand" evidence="5">
    <location>
        <begin position="107"/>
        <end position="109"/>
    </location>
</feature>
<accession>Q76BK2</accession>
<reference key="1">
    <citation type="journal article" date="2004" name="J. Biol. Chem.">
        <title>Xenopus laevis macrophage migration inhibitory factor is essential for axis formation and neural development.</title>
        <authorList>
            <person name="Suzuki M."/>
            <person name="Takamura Y."/>
            <person name="Maeno M."/>
            <person name="Tochinai S."/>
            <person name="Iyaguchi D."/>
            <person name="Tanaka I."/>
            <person name="Nishihira J."/>
            <person name="Ishibashi T."/>
        </authorList>
    </citation>
    <scope>NUCLEOTIDE SEQUENCE [MRNA]</scope>
    <scope>X-RAY CRYSTALLOGRAPHY (2.5 ANGSTROMS)</scope>
    <scope>FUNCTION</scope>
    <scope>SUBUNIT</scope>
    <scope>TISSUE SPECIFICITY</scope>
    <source>
        <tissue>Liver</tissue>
    </source>
</reference>
<reference key="2">
    <citation type="submission" date="2005-06" db="EMBL/GenBank/DDBJ databases">
        <authorList>
            <consortium name="NIH - Xenopus Gene Collection (XGC) project"/>
        </authorList>
    </citation>
    <scope>NUCLEOTIDE SEQUENCE [LARGE SCALE MRNA]</scope>
    <source>
        <tissue>Embryo</tissue>
    </source>
</reference>
<comment type="function">
    <text evidence="1 3">Pro-inflammatory cytokine. Involved in the innate immune response to bacterial pathogens. The expression of MIF at sites of inflammation suggests a role as mediator in regulating the function of macrophages in host defense (By similarity). Has phenylpyruvate tautomerase and dopachrome tautomerase activity (in vitro), but the physiological substrate is not known. It is not clear whether the tautomerase activity has any physiological relevance, and whether it is important for cytokine activity. Required for normal neural development during embryogenesis.</text>
</comment>
<comment type="catalytic activity">
    <reaction evidence="1">
        <text>3-phenylpyruvate = enol-phenylpyruvate</text>
        <dbReference type="Rhea" id="RHEA:17097"/>
        <dbReference type="ChEBI" id="CHEBI:16815"/>
        <dbReference type="ChEBI" id="CHEBI:18005"/>
        <dbReference type="EC" id="5.3.2.1"/>
    </reaction>
</comment>
<comment type="catalytic activity">
    <reaction evidence="1">
        <text>L-dopachrome = 5,6-dihydroxyindole-2-carboxylate</text>
        <dbReference type="Rhea" id="RHEA:13041"/>
        <dbReference type="ChEBI" id="CHEBI:16875"/>
        <dbReference type="ChEBI" id="CHEBI:57509"/>
        <dbReference type="EC" id="5.3.3.12"/>
    </reaction>
</comment>
<comment type="subunit">
    <text evidence="3">Homotrimer.</text>
</comment>
<comment type="subcellular location">
    <subcellularLocation>
        <location evidence="1">Secreted</location>
    </subcellularLocation>
    <subcellularLocation>
        <location evidence="1">Cytoplasm</location>
    </subcellularLocation>
    <text evidence="1">Does not have a cleavable signal sequence and is secreted via a specialized, non-classical pathway. Secreted by macrophages upon stimulation (By similarity).</text>
</comment>
<comment type="tissue specificity">
    <text evidence="3">Ubiquitous. Detected throughout embryogenesis. Detected in adult spleen, liver, kidney, heart, brain, intestine, testis and lung.</text>
</comment>
<comment type="similarity">
    <text evidence="4">Belongs to the MIF family.</text>
</comment>
<organism>
    <name type="scientific">Xenopus laevis</name>
    <name type="common">African clawed frog</name>
    <dbReference type="NCBI Taxonomy" id="8355"/>
    <lineage>
        <taxon>Eukaryota</taxon>
        <taxon>Metazoa</taxon>
        <taxon>Chordata</taxon>
        <taxon>Craniata</taxon>
        <taxon>Vertebrata</taxon>
        <taxon>Euteleostomi</taxon>
        <taxon>Amphibia</taxon>
        <taxon>Batrachia</taxon>
        <taxon>Anura</taxon>
        <taxon>Pipoidea</taxon>
        <taxon>Pipidae</taxon>
        <taxon>Xenopodinae</taxon>
        <taxon>Xenopus</taxon>
        <taxon>Xenopus</taxon>
    </lineage>
</organism>
<protein>
    <recommendedName>
        <fullName>Macrophage migration inhibitory factor</fullName>
        <shortName>MIF</shortName>
        <ecNumber evidence="1">5.3.2.1</ecNumber>
    </recommendedName>
    <alternativeName>
        <fullName>L-dopachrome isomerase</fullName>
    </alternativeName>
    <alternativeName>
        <fullName>L-dopachrome tautomerase</fullName>
        <ecNumber evidence="1">5.3.3.12</ecNumber>
    </alternativeName>
    <alternativeName>
        <fullName>Phenylpyruvate tautomerase</fullName>
    </alternativeName>
</protein>